<gene>
    <name type="primary">ABT1</name>
</gene>
<feature type="chain" id="PRO_0000285382" description="Activator of basal transcription 1">
    <location>
        <begin position="1"/>
        <end position="275"/>
    </location>
</feature>
<feature type="domain" description="RRM">
    <location>
        <begin position="46"/>
        <end position="145"/>
    </location>
</feature>
<feature type="region of interest" description="Disordered" evidence="4">
    <location>
        <begin position="1"/>
        <end position="39"/>
    </location>
</feature>
<feature type="region of interest" description="Disordered" evidence="4">
    <location>
        <begin position="200"/>
        <end position="275"/>
    </location>
</feature>
<feature type="coiled-coil region" evidence="3">
    <location>
        <begin position="164"/>
        <end position="194"/>
    </location>
</feature>
<feature type="compositionally biased region" description="Acidic residues" evidence="4">
    <location>
        <begin position="1"/>
        <end position="10"/>
    </location>
</feature>
<feature type="compositionally biased region" description="Acidic residues" evidence="4">
    <location>
        <begin position="25"/>
        <end position="34"/>
    </location>
</feature>
<feature type="compositionally biased region" description="Polar residues" evidence="4">
    <location>
        <begin position="262"/>
        <end position="275"/>
    </location>
</feature>
<feature type="modified residue" description="N-acetylmethionine" evidence="2">
    <location>
        <position position="1"/>
    </location>
</feature>
<comment type="function">
    <text evidence="1">Could be a novel TATA-binding protein (TBP) which can function as a basal transcription activator. Can act as a regulator of basal transcription for class II genes (By similarity).</text>
</comment>
<comment type="subunit">
    <text evidence="1">Interacts with ESF1/ABTAP. Interacts with IGHMBP2.</text>
</comment>
<comment type="subcellular location">
    <subcellularLocation>
        <location evidence="1">Nucleus</location>
    </subcellularLocation>
    <subcellularLocation>
        <location evidence="1">Nucleus</location>
        <location evidence="1">Nucleolus</location>
    </subcellularLocation>
</comment>
<comment type="similarity">
    <text evidence="5">Belongs to the ESF2/ABP1 family.</text>
</comment>
<dbReference type="EMBL" id="BC118119">
    <property type="protein sequence ID" value="AAI18120.1"/>
    <property type="molecule type" value="mRNA"/>
</dbReference>
<dbReference type="RefSeq" id="NP_001069620.1">
    <property type="nucleotide sequence ID" value="NM_001076152.2"/>
</dbReference>
<dbReference type="FunCoup" id="Q148M8">
    <property type="interactions" value="4282"/>
</dbReference>
<dbReference type="STRING" id="9913.ENSBTAP00000014277"/>
<dbReference type="PaxDb" id="9913-ENSBTAP00000014277"/>
<dbReference type="Ensembl" id="ENSBTAT00000014277.3">
    <property type="protein sequence ID" value="ENSBTAP00000014277.2"/>
    <property type="gene ID" value="ENSBTAG00000010784.3"/>
</dbReference>
<dbReference type="GeneID" id="539270"/>
<dbReference type="KEGG" id="bta:539270"/>
<dbReference type="CTD" id="29777"/>
<dbReference type="VEuPathDB" id="HostDB:ENSBTAG00000010784"/>
<dbReference type="VGNC" id="VGNC:25514">
    <property type="gene designation" value="ABT1"/>
</dbReference>
<dbReference type="eggNOG" id="KOG3152">
    <property type="taxonomic scope" value="Eukaryota"/>
</dbReference>
<dbReference type="GeneTree" id="ENSGT00390000002062"/>
<dbReference type="HOGENOM" id="CLU_054086_3_1_1"/>
<dbReference type="InParanoid" id="Q148M8"/>
<dbReference type="OMA" id="PNGSWAF"/>
<dbReference type="OrthoDB" id="287393at2759"/>
<dbReference type="TreeFam" id="TF314506"/>
<dbReference type="CD-CODE" id="D7FE2080">
    <property type="entry name" value="Nucleolus"/>
</dbReference>
<dbReference type="Proteomes" id="UP000009136">
    <property type="component" value="Chromosome 23"/>
</dbReference>
<dbReference type="Bgee" id="ENSBTAG00000010784">
    <property type="expression patterns" value="Expressed in conceptus and 106 other cell types or tissues"/>
</dbReference>
<dbReference type="GO" id="GO:0005730">
    <property type="term" value="C:nucleolus"/>
    <property type="evidence" value="ECO:0000318"/>
    <property type="project" value="GO_Central"/>
</dbReference>
<dbReference type="GO" id="GO:0003677">
    <property type="term" value="F:DNA binding"/>
    <property type="evidence" value="ECO:0007669"/>
    <property type="project" value="UniProtKB-KW"/>
</dbReference>
<dbReference type="GO" id="GO:0003723">
    <property type="term" value="F:RNA binding"/>
    <property type="evidence" value="ECO:0000318"/>
    <property type="project" value="GO_Central"/>
</dbReference>
<dbReference type="GO" id="GO:0000480">
    <property type="term" value="P:endonucleolytic cleavage in 5'-ETS of tricistronic rRNA transcript (SSU-rRNA, 5.8S rRNA, LSU-rRNA)"/>
    <property type="evidence" value="ECO:0000318"/>
    <property type="project" value="GO_Central"/>
</dbReference>
<dbReference type="GO" id="GO:0000447">
    <property type="term" value="P:endonucleolytic cleavage in ITS1 to separate SSU-rRNA from 5.8S rRNA and LSU-rRNA from tricistronic rRNA transcript (SSU-rRNA, 5.8S rRNA, LSU-rRNA)"/>
    <property type="evidence" value="ECO:0000318"/>
    <property type="project" value="GO_Central"/>
</dbReference>
<dbReference type="GO" id="GO:0000472">
    <property type="term" value="P:endonucleolytic cleavage to generate mature 5'-end of SSU-rRNA from (SSU-rRNA, 5.8S rRNA, LSU-rRNA)"/>
    <property type="evidence" value="ECO:0000318"/>
    <property type="project" value="GO_Central"/>
</dbReference>
<dbReference type="GO" id="GO:0034462">
    <property type="term" value="P:small-subunit processome assembly"/>
    <property type="evidence" value="ECO:0000318"/>
    <property type="project" value="GO_Central"/>
</dbReference>
<dbReference type="CDD" id="cd12263">
    <property type="entry name" value="RRM_ABT1_like"/>
    <property type="match status" value="1"/>
</dbReference>
<dbReference type="FunFam" id="3.30.70.330:FF:000447">
    <property type="entry name" value="Activator of basal transcription 1"/>
    <property type="match status" value="1"/>
</dbReference>
<dbReference type="Gene3D" id="3.30.70.330">
    <property type="match status" value="1"/>
</dbReference>
<dbReference type="InterPro" id="IPR039119">
    <property type="entry name" value="ABT1/Esf2"/>
</dbReference>
<dbReference type="InterPro" id="IPR034353">
    <property type="entry name" value="ABT1/ESF2_RRM"/>
</dbReference>
<dbReference type="InterPro" id="IPR012677">
    <property type="entry name" value="Nucleotide-bd_a/b_plait_sf"/>
</dbReference>
<dbReference type="InterPro" id="IPR035979">
    <property type="entry name" value="RBD_domain_sf"/>
</dbReference>
<dbReference type="PANTHER" id="PTHR12311">
    <property type="entry name" value="ACTIVATOR OF BASAL TRANSCRIPTION 1"/>
    <property type="match status" value="1"/>
</dbReference>
<dbReference type="PANTHER" id="PTHR12311:SF7">
    <property type="entry name" value="ACTIVATOR OF BASAL TRANSCRIPTION 1"/>
    <property type="match status" value="1"/>
</dbReference>
<dbReference type="SUPFAM" id="SSF54928">
    <property type="entry name" value="RNA-binding domain, RBD"/>
    <property type="match status" value="1"/>
</dbReference>
<name>ABT1_BOVIN</name>
<sequence>MEVEGLELDTAELGPLEGSHQKLEAEEEQEESEDAAGGSKKRVVPGIVYLGHIPPRFRPLHVRNLLSAYGEVGRVFFQAEDGFVKRKKKAAAASAAGGKKRSKYSKDYTEGWVEFRDKRVAKRVAVSLHNTPMGSRRRSPFRYDLWNLKYLHRFTWSHLSEHLAFERQVRRQRLRAEVAQAKRETDFYLRSVERGQRFLAADGDSTRPNGSWAFAQRPTEQEMRARKAARPGGRERARLANAQDQARSNRGLLAKIFGAPTPSESRGNSSPARNS</sequence>
<protein>
    <recommendedName>
        <fullName>Activator of basal transcription 1</fullName>
    </recommendedName>
</protein>
<organism>
    <name type="scientific">Bos taurus</name>
    <name type="common">Bovine</name>
    <dbReference type="NCBI Taxonomy" id="9913"/>
    <lineage>
        <taxon>Eukaryota</taxon>
        <taxon>Metazoa</taxon>
        <taxon>Chordata</taxon>
        <taxon>Craniata</taxon>
        <taxon>Vertebrata</taxon>
        <taxon>Euteleostomi</taxon>
        <taxon>Mammalia</taxon>
        <taxon>Eutheria</taxon>
        <taxon>Laurasiatheria</taxon>
        <taxon>Artiodactyla</taxon>
        <taxon>Ruminantia</taxon>
        <taxon>Pecora</taxon>
        <taxon>Bovidae</taxon>
        <taxon>Bovinae</taxon>
        <taxon>Bos</taxon>
    </lineage>
</organism>
<reference key="1">
    <citation type="submission" date="2006-06" db="EMBL/GenBank/DDBJ databases">
        <authorList>
            <consortium name="NIH - Mammalian Gene Collection (MGC) project"/>
        </authorList>
    </citation>
    <scope>NUCLEOTIDE SEQUENCE [LARGE SCALE MRNA]</scope>
    <source>
        <strain>Hereford</strain>
        <tissue>Thymus</tissue>
    </source>
</reference>
<proteinExistence type="evidence at transcript level"/>
<accession>Q148M8</accession>
<evidence type="ECO:0000250" key="1"/>
<evidence type="ECO:0000250" key="2">
    <source>
        <dbReference type="UniProtKB" id="Q9ULW3"/>
    </source>
</evidence>
<evidence type="ECO:0000255" key="3"/>
<evidence type="ECO:0000256" key="4">
    <source>
        <dbReference type="SAM" id="MobiDB-lite"/>
    </source>
</evidence>
<evidence type="ECO:0000305" key="5"/>
<keyword id="KW-0007">Acetylation</keyword>
<keyword id="KW-0175">Coiled coil</keyword>
<keyword id="KW-0238">DNA-binding</keyword>
<keyword id="KW-0539">Nucleus</keyword>
<keyword id="KW-1185">Reference proteome</keyword>
<keyword id="KW-0694">RNA-binding</keyword>
<keyword id="KW-0804">Transcription</keyword>
<keyword id="KW-0805">Transcription regulation</keyword>